<keyword id="KW-0687">Ribonucleoprotein</keyword>
<keyword id="KW-0689">Ribosomal protein</keyword>
<keyword id="KW-0694">RNA-binding</keyword>
<keyword id="KW-0699">rRNA-binding</keyword>
<protein>
    <recommendedName>
        <fullName evidence="1">Small ribosomal subunit protein uS17</fullName>
    </recommendedName>
    <alternativeName>
        <fullName evidence="2">30S ribosomal protein S17</fullName>
    </alternativeName>
</protein>
<organism>
    <name type="scientific">Francisella tularensis subsp. mediasiatica (strain FSC147)</name>
    <dbReference type="NCBI Taxonomy" id="441952"/>
    <lineage>
        <taxon>Bacteria</taxon>
        <taxon>Pseudomonadati</taxon>
        <taxon>Pseudomonadota</taxon>
        <taxon>Gammaproteobacteria</taxon>
        <taxon>Thiotrichales</taxon>
        <taxon>Francisellaceae</taxon>
        <taxon>Francisella</taxon>
    </lineage>
</organism>
<accession>B2SDX6</accession>
<feature type="chain" id="PRO_1000143260" description="Small ribosomal subunit protein uS17">
    <location>
        <begin position="1"/>
        <end position="83"/>
    </location>
</feature>
<comment type="function">
    <text evidence="1">One of the primary rRNA binding proteins, it binds specifically to the 5'-end of 16S ribosomal RNA.</text>
</comment>
<comment type="subunit">
    <text evidence="1">Part of the 30S ribosomal subunit.</text>
</comment>
<comment type="similarity">
    <text evidence="1">Belongs to the universal ribosomal protein uS17 family.</text>
</comment>
<dbReference type="EMBL" id="CP000915">
    <property type="protein sequence ID" value="ACD31340.1"/>
    <property type="molecule type" value="Genomic_DNA"/>
</dbReference>
<dbReference type="SMR" id="B2SDX6"/>
<dbReference type="KEGG" id="ftm:FTM_1518"/>
<dbReference type="HOGENOM" id="CLU_073626_1_1_6"/>
<dbReference type="GO" id="GO:0022627">
    <property type="term" value="C:cytosolic small ribosomal subunit"/>
    <property type="evidence" value="ECO:0007669"/>
    <property type="project" value="TreeGrafter"/>
</dbReference>
<dbReference type="GO" id="GO:0019843">
    <property type="term" value="F:rRNA binding"/>
    <property type="evidence" value="ECO:0007669"/>
    <property type="project" value="UniProtKB-UniRule"/>
</dbReference>
<dbReference type="GO" id="GO:0003735">
    <property type="term" value="F:structural constituent of ribosome"/>
    <property type="evidence" value="ECO:0007669"/>
    <property type="project" value="InterPro"/>
</dbReference>
<dbReference type="GO" id="GO:0006412">
    <property type="term" value="P:translation"/>
    <property type="evidence" value="ECO:0007669"/>
    <property type="project" value="UniProtKB-UniRule"/>
</dbReference>
<dbReference type="CDD" id="cd00364">
    <property type="entry name" value="Ribosomal_uS17"/>
    <property type="match status" value="1"/>
</dbReference>
<dbReference type="Gene3D" id="2.40.50.140">
    <property type="entry name" value="Nucleic acid-binding proteins"/>
    <property type="match status" value="1"/>
</dbReference>
<dbReference type="HAMAP" id="MF_01345_B">
    <property type="entry name" value="Ribosomal_uS17_B"/>
    <property type="match status" value="1"/>
</dbReference>
<dbReference type="InterPro" id="IPR012340">
    <property type="entry name" value="NA-bd_OB-fold"/>
</dbReference>
<dbReference type="InterPro" id="IPR000266">
    <property type="entry name" value="Ribosomal_uS17"/>
</dbReference>
<dbReference type="InterPro" id="IPR019984">
    <property type="entry name" value="Ribosomal_uS17_bact/chlr"/>
</dbReference>
<dbReference type="NCBIfam" id="NF004123">
    <property type="entry name" value="PRK05610.1"/>
    <property type="match status" value="1"/>
</dbReference>
<dbReference type="NCBIfam" id="TIGR03635">
    <property type="entry name" value="uS17_bact"/>
    <property type="match status" value="1"/>
</dbReference>
<dbReference type="PANTHER" id="PTHR10744">
    <property type="entry name" value="40S RIBOSOMAL PROTEIN S11 FAMILY MEMBER"/>
    <property type="match status" value="1"/>
</dbReference>
<dbReference type="PANTHER" id="PTHR10744:SF1">
    <property type="entry name" value="SMALL RIBOSOMAL SUBUNIT PROTEIN US17M"/>
    <property type="match status" value="1"/>
</dbReference>
<dbReference type="Pfam" id="PF00366">
    <property type="entry name" value="Ribosomal_S17"/>
    <property type="match status" value="1"/>
</dbReference>
<dbReference type="PRINTS" id="PR00973">
    <property type="entry name" value="RIBOSOMALS17"/>
</dbReference>
<dbReference type="SUPFAM" id="SSF50249">
    <property type="entry name" value="Nucleic acid-binding proteins"/>
    <property type="match status" value="1"/>
</dbReference>
<gene>
    <name evidence="1" type="primary">rpsQ</name>
    <name type="ordered locus">FTM_1518</name>
</gene>
<name>RS17_FRATM</name>
<sequence>MSDKIRLLEGKVSSVAMDKTVVVRAERYVKHPLYGKFVKKTTKYYVHDENNECKEGDVIKFKETRPYSKTKKWCLVDIIHREK</sequence>
<proteinExistence type="inferred from homology"/>
<evidence type="ECO:0000255" key="1">
    <source>
        <dbReference type="HAMAP-Rule" id="MF_01345"/>
    </source>
</evidence>
<evidence type="ECO:0000305" key="2"/>
<reference key="1">
    <citation type="journal article" date="2009" name="PLoS Pathog.">
        <title>Molecular evolutionary consequences of niche restriction in Francisella tularensis, a facultative intracellular pathogen.</title>
        <authorList>
            <person name="Larsson P."/>
            <person name="Elfsmark D."/>
            <person name="Svensson K."/>
            <person name="Wikstroem P."/>
            <person name="Forsman M."/>
            <person name="Brettin T."/>
            <person name="Keim P."/>
            <person name="Johansson A."/>
        </authorList>
    </citation>
    <scope>NUCLEOTIDE SEQUENCE [LARGE SCALE GENOMIC DNA]</scope>
    <source>
        <strain>FSC147</strain>
    </source>
</reference>